<proteinExistence type="evidence at protein level"/>
<reference key="1">
    <citation type="journal article" date="1992" name="J. Biol. Chem.">
        <title>The sequence of the flavoprotein subunit of bovine heart succinate dehydrogenase.</title>
        <authorList>
            <person name="Birch-MacHin M.A."/>
            <person name="Farnsworth L."/>
            <person name="Ackrell B.A.C."/>
            <person name="Cochran B."/>
            <person name="Jackson S."/>
            <person name="Bindoff L.A."/>
            <person name="Aitken A."/>
            <person name="Diamond A.G."/>
            <person name="Turnbull D.M."/>
        </authorList>
    </citation>
    <scope>NUCLEOTIDE SEQUENCE [MRNA]</scope>
    <scope>PARTIAL PROTEIN SEQUENCE</scope>
    <source>
        <tissue>Heart</tissue>
    </source>
</reference>
<reference key="2">
    <citation type="journal article" date="1994" name="Biochim. Biophys. Acta">
        <title>The cDNA sequence of the flavoprotein subunit of human heart succinate dehydrogenase.</title>
        <authorList>
            <person name="Morris A.A.M."/>
            <person name="Farnsworth L."/>
            <person name="Ackrell B.A.C."/>
            <person name="Turnbull D.M."/>
            <person name="Birch-MacHin M.A."/>
        </authorList>
    </citation>
    <scope>SEQUENCE REVISION</scope>
</reference>
<reference key="3">
    <citation type="journal article" date="1999" name="Anim. Genet.">
        <title>Mapping of the SDHA locus to bovine chromosome 20.</title>
        <authorList>
            <person name="Sonstegard T.S."/>
            <person name="Kappes S.M."/>
        </authorList>
    </citation>
    <scope>NUCLEOTIDE SEQUENCE [GENOMIC DNA] OF 153-253</scope>
    <source>
        <strain>Hereford X Nelore</strain>
    </source>
</reference>
<reference key="4">
    <citation type="journal article" date="1988" name="Biochim. Biophys. Acta">
        <title>Oxidation of malate by the mitochondrial succinate-ubiquinone reductase.</title>
        <authorList>
            <person name="Belikova Y.O."/>
            <person name="Kotlyar A.B."/>
            <person name="Vinogradov A.D."/>
        </authorList>
    </citation>
    <scope>FUNCTION</scope>
    <scope>CATALYTIC ACTIVITY</scope>
    <scope>BIOPHYSICOCHEMICAL PROPERTIES</scope>
    <scope>ACTIVITY REGULATION</scope>
</reference>
<reference key="5">
    <citation type="journal article" date="1991" name="FEBS Lett.">
        <title>Direct demonstration of enol-oxaloacetate as an immediate product of malate oxidation by the mammalian succinate dehydrogenase.</title>
        <authorList>
            <person name="Panchenko M.V."/>
            <person name="Vinogradov A.D."/>
        </authorList>
    </citation>
    <scope>FUNCTION</scope>
    <scope>CATALYTIC ACTIVITY</scope>
</reference>
<reference key="6">
    <citation type="journal article" date="1993" name="Biochim. Biophys. Acta">
        <title>Fumarate reductase activity of bovine heart succinate-ubiquinone reductase. New assay system and overall properties of the reaction.</title>
        <authorList>
            <person name="Grivennikova V.G."/>
            <person name="Gavrikova E.V."/>
            <person name="Timoshin A.A."/>
            <person name="Vinogradov A.D."/>
        </authorList>
    </citation>
    <scope>FUNCTION</scope>
    <scope>CATALYTIC ACTIVITY</scope>
    <scope>PATHWAY</scope>
</reference>
<organism>
    <name type="scientific">Bos taurus</name>
    <name type="common">Bovine</name>
    <dbReference type="NCBI Taxonomy" id="9913"/>
    <lineage>
        <taxon>Eukaryota</taxon>
        <taxon>Metazoa</taxon>
        <taxon>Chordata</taxon>
        <taxon>Craniata</taxon>
        <taxon>Vertebrata</taxon>
        <taxon>Euteleostomi</taxon>
        <taxon>Mammalia</taxon>
        <taxon>Eutheria</taxon>
        <taxon>Laurasiatheria</taxon>
        <taxon>Artiodactyla</taxon>
        <taxon>Ruminantia</taxon>
        <taxon>Pecora</taxon>
        <taxon>Bovidae</taxon>
        <taxon>Bovinae</taxon>
        <taxon>Bos</taxon>
    </lineage>
</organism>
<sequence length="665" mass="72944">MSGVAAVSRLWRARRLALTCTKWSAAWQTGTRSFHFTVDGNKRSSAKVSDAISAQYPVVDHEFDAVVVGAGGAGLRAAFGLSEAGFNTACVTKLFPTRSHTVAAQGGINAALGNMEEDNWRWHFYDTVKGSDWLGDQDAIHYMTEQAPASVVELENYGMPFSRTEDGKIYQRAFGGQSLKFGKGGQAHRCCCVADRTGHSLLHTLYGRSLRYDTSYFVEYFALDLLMESGECRGVIALCIEDGSIHRIRARNTVIATGGYGRTYFSCTSAHTSTGDGTAMVTRAGLPCQDLEFVQFHPTGIYGAGCLITEGCRGEGGILINSQGERFMERYAPVAKDLASRDVVSRSMTLEIREGRGCGPEKDHVYLQLHHLPPAQLAMRLPGISETAMIFAGVDVTKEPIPVLPTVHYNMGGIPTNYKGQVLRHVNGQDQGVPGLYACGEAACASVHGANRLGANSLLDLVVFGRACALSIAESCRPGDKVPSIKPNAGEESVMNLDKLRFANGSIRTSELRLNMQKSMQSHAAVFRVGSVLQEGCEKISSLYGDLRHLKTFDRGMVWNTDLVETLELQNLMLCALQTIYGAEARKESRGGPRREDFKERVDEYDYSKPIQGQQKKPFEQHWRKHTLSYVDIKTGKVTLEYRPVIDRTLNETDCATVPPAIGSY</sequence>
<feature type="transit peptide" description="Mitochondrion" evidence="2">
    <location>
        <begin position="1"/>
        <end position="43"/>
    </location>
</feature>
<feature type="chain" id="PRO_0000010334" description="Succinate dehydrogenase [ubiquinone] flavoprotein subunit, mitochondrial">
    <location>
        <begin position="44"/>
        <end position="665"/>
    </location>
</feature>
<feature type="active site" description="Proton acceptor" evidence="4">
    <location>
        <position position="341"/>
    </location>
</feature>
<feature type="binding site" evidence="1">
    <location>
        <position position="70"/>
    </location>
    <ligand>
        <name>FAD</name>
        <dbReference type="ChEBI" id="CHEBI:57692"/>
    </ligand>
</feature>
<feature type="binding site" evidence="1">
    <location>
        <position position="73"/>
    </location>
    <ligand>
        <name>FAD</name>
        <dbReference type="ChEBI" id="CHEBI:57692"/>
    </ligand>
</feature>
<feature type="binding site" evidence="1">
    <location>
        <position position="92"/>
    </location>
    <ligand>
        <name>FAD</name>
        <dbReference type="ChEBI" id="CHEBI:57692"/>
    </ligand>
</feature>
<feature type="binding site" evidence="1">
    <location>
        <position position="93"/>
    </location>
    <ligand>
        <name>FAD</name>
        <dbReference type="ChEBI" id="CHEBI:57692"/>
    </ligand>
</feature>
<feature type="binding site" evidence="1">
    <location>
        <position position="99"/>
    </location>
    <ligand>
        <name>FAD</name>
        <dbReference type="ChEBI" id="CHEBI:57692"/>
    </ligand>
</feature>
<feature type="binding site" evidence="1">
    <location>
        <position position="101"/>
    </location>
    <ligand>
        <name>FAD</name>
        <dbReference type="ChEBI" id="CHEBI:57692"/>
    </ligand>
</feature>
<feature type="binding site" evidence="1">
    <location>
        <position position="106"/>
    </location>
    <ligand>
        <name>FAD</name>
        <dbReference type="ChEBI" id="CHEBI:57692"/>
    </ligand>
</feature>
<feature type="binding site" evidence="1">
    <location>
        <position position="222"/>
    </location>
    <ligand>
        <name>FAD</name>
        <dbReference type="ChEBI" id="CHEBI:57692"/>
    </ligand>
</feature>
<feature type="binding site" evidence="1">
    <location>
        <position position="276"/>
    </location>
    <ligand>
        <name>FAD</name>
        <dbReference type="ChEBI" id="CHEBI:57692"/>
    </ligand>
</feature>
<feature type="binding site" evidence="1">
    <location>
        <position position="297"/>
    </location>
    <ligand>
        <name>oxaloacetate</name>
        <dbReference type="ChEBI" id="CHEBI:16452"/>
    </ligand>
</feature>
<feature type="binding site" evidence="1">
    <location>
        <position position="341"/>
    </location>
    <ligand>
        <name>oxaloacetate</name>
        <dbReference type="ChEBI" id="CHEBI:16452"/>
    </ligand>
</feature>
<feature type="binding site" evidence="1">
    <location>
        <position position="408"/>
    </location>
    <ligand>
        <name>oxaloacetate</name>
        <dbReference type="ChEBI" id="CHEBI:16452"/>
    </ligand>
</feature>
<feature type="binding site" evidence="1">
    <location>
        <position position="441"/>
    </location>
    <ligand>
        <name>FAD</name>
        <dbReference type="ChEBI" id="CHEBI:57692"/>
    </ligand>
</feature>
<feature type="binding site" evidence="1">
    <location>
        <position position="452"/>
    </location>
    <ligand>
        <name>oxaloacetate</name>
        <dbReference type="ChEBI" id="CHEBI:16452"/>
    </ligand>
</feature>
<feature type="binding site" evidence="1">
    <location>
        <position position="455"/>
    </location>
    <ligand>
        <name>oxaloacetate</name>
        <dbReference type="ChEBI" id="CHEBI:16452"/>
    </ligand>
</feature>
<feature type="binding site" evidence="1">
    <location>
        <position position="457"/>
    </location>
    <ligand>
        <name>FAD</name>
        <dbReference type="ChEBI" id="CHEBI:57692"/>
    </ligand>
</feature>
<feature type="binding site" evidence="1">
    <location>
        <position position="458"/>
    </location>
    <ligand>
        <name>FAD</name>
        <dbReference type="ChEBI" id="CHEBI:57692"/>
    </ligand>
</feature>
<feature type="modified residue" description="Tele-8alpha-FAD histidine" evidence="2">
    <location>
        <position position="100"/>
    </location>
</feature>
<feature type="modified residue" description="N6-acetyllysine" evidence="3">
    <location>
        <position position="168"/>
    </location>
</feature>
<feature type="modified residue" description="N6-acetyllysine; alternate" evidence="1">
    <location>
        <position position="180"/>
    </location>
</feature>
<feature type="modified residue" description="N6-succinyllysine; alternate" evidence="3">
    <location>
        <position position="180"/>
    </location>
</feature>
<feature type="modified residue" description="N6-acetyllysine" evidence="3">
    <location>
        <position position="183"/>
    </location>
</feature>
<feature type="modified residue" description="Phosphotyrosine; by SRC" evidence="1">
    <location>
        <position position="216"/>
    </location>
</feature>
<feature type="modified residue" description="N6-acetyllysine; alternate" evidence="1">
    <location>
        <position position="336"/>
    </location>
</feature>
<feature type="modified residue" description="N6-succinyllysine; alternate" evidence="3">
    <location>
        <position position="336"/>
    </location>
</feature>
<feature type="modified residue" description="N6-acetyllysine" evidence="3">
    <location>
        <position position="481"/>
    </location>
</feature>
<feature type="modified residue" description="N6-acetyllysine; alternate" evidence="3">
    <location>
        <position position="486"/>
    </location>
</feature>
<feature type="modified residue" description="N6-succinyllysine; alternate" evidence="3">
    <location>
        <position position="486"/>
    </location>
</feature>
<feature type="modified residue" description="N6-acetyllysine; alternate" evidence="3">
    <location>
        <position position="499"/>
    </location>
</feature>
<feature type="modified residue" description="N6-succinyllysine; alternate" evidence="3">
    <location>
        <position position="499"/>
    </location>
</feature>
<feature type="modified residue" description="N6-acetyllysine" evidence="3">
    <location>
        <position position="518"/>
    </location>
</feature>
<feature type="modified residue" description="N6-acetyllysine; alternate" evidence="3">
    <location>
        <position position="539"/>
    </location>
</feature>
<feature type="modified residue" description="N6-succinyllysine; alternate" evidence="3">
    <location>
        <position position="539"/>
    </location>
</feature>
<feature type="modified residue" description="N6-acetyllysine" evidence="3">
    <location>
        <position position="551"/>
    </location>
</feature>
<feature type="modified residue" description="N6-acetyllysine" evidence="3">
    <location>
        <position position="599"/>
    </location>
</feature>
<feature type="modified residue" description="N6-acetyllysine" evidence="1">
    <location>
        <position position="609"/>
    </location>
</feature>
<feature type="modified residue" description="N6-succinyllysine" evidence="3">
    <location>
        <position position="616"/>
    </location>
</feature>
<feature type="modified residue" description="N6-acetyllysine" evidence="3">
    <location>
        <position position="625"/>
    </location>
</feature>
<feature type="modified residue" description="N6-acetyllysine" evidence="3">
    <location>
        <position position="634"/>
    </location>
</feature>
<feature type="modified residue" description="N6-acetyllysine" evidence="3">
    <location>
        <position position="637"/>
    </location>
</feature>
<feature type="sequence conflict" description="In Ref. 3; AAD38150." evidence="8" ref="3">
    <original>DGSIHRIRARNT</original>
    <variation>ERVHPPHQGQEH</variation>
    <location>
        <begin position="242"/>
        <end position="253"/>
    </location>
</feature>
<comment type="function">
    <text evidence="1 5 6 7">Flavoprotein (FP) subunit of succinate dehydrogenase (SDH) that is involved in complex II of the mitochondrial electron transport chain and is responsible for transferring electrons from succinate to ubiquinone (coenzyme Q) (PubMed:2902878, PubMed:8417779). SDH also oxidizes malate to the non-canonical enol form of oxaloacetate, enol-oxaloacetate (PubMed:1864383, PubMed:2902878). Enol-oxaloacetate, which is a potent inhibitor of the succinate dehydrogenase activity, is further isomerized into keto-oxaloacetate (PubMed:2902878). Can act as a tumor suppressor (By similarity).</text>
</comment>
<comment type="catalytic activity">
    <reaction evidence="10 11">
        <text>a ubiquinone + succinate = a ubiquinol + fumarate</text>
        <dbReference type="Rhea" id="RHEA:13713"/>
        <dbReference type="Rhea" id="RHEA-COMP:9565"/>
        <dbReference type="Rhea" id="RHEA-COMP:9566"/>
        <dbReference type="ChEBI" id="CHEBI:16389"/>
        <dbReference type="ChEBI" id="CHEBI:17976"/>
        <dbReference type="ChEBI" id="CHEBI:29806"/>
        <dbReference type="ChEBI" id="CHEBI:30031"/>
        <dbReference type="EC" id="1.3.5.1"/>
    </reaction>
</comment>
<comment type="catalytic activity">
    <reaction evidence="9 10">
        <text>(R)-malate + a quinone = enol-oxaloacetate + a quinol</text>
        <dbReference type="Rhea" id="RHEA:79827"/>
        <dbReference type="ChEBI" id="CHEBI:15588"/>
        <dbReference type="ChEBI" id="CHEBI:17479"/>
        <dbReference type="ChEBI" id="CHEBI:24646"/>
        <dbReference type="ChEBI" id="CHEBI:132124"/>
    </reaction>
    <physiologicalReaction direction="left-to-right" evidence="9 10">
        <dbReference type="Rhea" id="RHEA:79828"/>
    </physiologicalReaction>
</comment>
<comment type="catalytic activity">
    <reaction evidence="9 10">
        <text>(S)-malate + a quinone = enol-oxaloacetate + a quinol</text>
        <dbReference type="Rhea" id="RHEA:79831"/>
        <dbReference type="ChEBI" id="CHEBI:15589"/>
        <dbReference type="ChEBI" id="CHEBI:17479"/>
        <dbReference type="ChEBI" id="CHEBI:24646"/>
        <dbReference type="ChEBI" id="CHEBI:132124"/>
    </reaction>
    <physiologicalReaction direction="left-to-right" evidence="9 10">
        <dbReference type="Rhea" id="RHEA:79832"/>
    </physiologicalReaction>
</comment>
<comment type="cofactor">
    <cofactor evidence="2">
        <name>FAD</name>
        <dbReference type="ChEBI" id="CHEBI:57692"/>
    </cofactor>
</comment>
<comment type="activity regulation">
    <text evidence="6">Enol-oxaloacetate inhibits the succinate dehydrogenase activity.</text>
</comment>
<comment type="biophysicochemical properties">
    <kinetics>
        <KM evidence="5">2.2 mM for L-malate</KM>
        <KM evidence="5">1.5 mM for D-malate</KM>
        <KM evidence="5">0.1 mM for succinate</KM>
        <Vmax evidence="5">0.05 umol/min/mg enzyme with L-malate as substrate</Vmax>
        <Vmax evidence="5">0.1 umol/min/mg enzyme with D-malate as substrate</Vmax>
        <Vmax evidence="5">10.0 umol/min/mg enzyme with succinate as substrate</Vmax>
    </kinetics>
</comment>
<comment type="pathway">
    <text evidence="11">Carbohydrate metabolism; tricarboxylic acid cycle; fumarate from succinate (eukaryal route): step 1/1.</text>
</comment>
<comment type="subunit">
    <text evidence="1 2">Component of complex II composed of four subunits: the flavoprotein (FP) SDHA, iron-sulfur protein (IP) SDHB, and a cytochrome b560 composed of SDHC and SDHD (By similarity). Interacts with SDHAF2/SDH5; interaction is required for FAD attachment (By similarity). Interacts with TRAP1 (By similarity). Interacts with LACC1 (By similarity).</text>
</comment>
<comment type="subcellular location">
    <subcellularLocation>
        <location evidence="2">Mitochondrion inner membrane</location>
        <topology evidence="2">Peripheral membrane protein</topology>
        <orientation evidence="2">Matrix side</orientation>
    </subcellularLocation>
</comment>
<comment type="PTM">
    <text evidence="1">Phosphorylation at Tyr-216 is important for efficient electron transfer in complex II and the prevention of ROS generation.</text>
</comment>
<comment type="PTM">
    <text evidence="3">Acetylated. Deacetylated by SIRT3.</text>
</comment>
<comment type="similarity">
    <text evidence="8">Belongs to the FAD-dependent oxidoreductase 2 family. FRD/SDH subfamily.</text>
</comment>
<name>SDHA_BOVIN</name>
<protein>
    <recommendedName>
        <fullName>Succinate dehydrogenase [ubiquinone] flavoprotein subunit, mitochondrial</fullName>
        <ecNumber evidence="9 11">1.3.5.1</ecNumber>
    </recommendedName>
    <alternativeName>
        <fullName>Flavoprotein subunit of complex II</fullName>
        <shortName>Fp</shortName>
    </alternativeName>
    <alternativeName>
        <fullName evidence="8">Malate dehydrogenase [quinone] flavoprotein subunit</fullName>
        <ecNumber evidence="9 10">1.1.5.-</ecNumber>
    </alternativeName>
</protein>
<evidence type="ECO:0000250" key="1">
    <source>
        <dbReference type="UniProtKB" id="P31040"/>
    </source>
</evidence>
<evidence type="ECO:0000250" key="2">
    <source>
        <dbReference type="UniProtKB" id="Q0QF01"/>
    </source>
</evidence>
<evidence type="ECO:0000250" key="3">
    <source>
        <dbReference type="UniProtKB" id="Q8K2B3"/>
    </source>
</evidence>
<evidence type="ECO:0000250" key="4">
    <source>
        <dbReference type="UniProtKB" id="Q9YHT1"/>
    </source>
</evidence>
<evidence type="ECO:0000269" key="5">
    <source>
    </source>
</evidence>
<evidence type="ECO:0000269" key="6">
    <source>
    </source>
</evidence>
<evidence type="ECO:0000269" key="7">
    <source>
    </source>
</evidence>
<evidence type="ECO:0000305" key="8"/>
<evidence type="ECO:0000305" key="9">
    <source>
    </source>
</evidence>
<evidence type="ECO:0000305" key="10">
    <source>
    </source>
</evidence>
<evidence type="ECO:0000305" key="11">
    <source>
    </source>
</evidence>
<dbReference type="EC" id="1.3.5.1" evidence="9 11"/>
<dbReference type="EC" id="1.1.5.-" evidence="9 10"/>
<dbReference type="EMBL" id="M60879">
    <property type="protein sequence ID" value="AAA30758.1"/>
    <property type="status" value="ALT_SEQ"/>
    <property type="molecule type" value="mRNA"/>
</dbReference>
<dbReference type="EMBL" id="AF139922">
    <property type="protein sequence ID" value="AAD38150.1"/>
    <property type="molecule type" value="Genomic_DNA"/>
</dbReference>
<dbReference type="PIR" id="A42792">
    <property type="entry name" value="A42792"/>
</dbReference>
<dbReference type="RefSeq" id="NP_776603.1">
    <property type="nucleotide sequence ID" value="NM_174178.2"/>
</dbReference>
<dbReference type="SMR" id="P31039"/>
<dbReference type="CORUM" id="P31039"/>
<dbReference type="FunCoup" id="P31039">
    <property type="interactions" value="1721"/>
</dbReference>
<dbReference type="IntAct" id="P31039">
    <property type="interactions" value="2"/>
</dbReference>
<dbReference type="STRING" id="9913.ENSBTAP00000056370"/>
<dbReference type="GlyGen" id="P31039">
    <property type="glycosylation" value="1 site, 1 O-linked glycan (1 site)"/>
</dbReference>
<dbReference type="PaxDb" id="9913-ENSBTAP00000054495"/>
<dbReference type="PeptideAtlas" id="P31039"/>
<dbReference type="GeneID" id="281480"/>
<dbReference type="KEGG" id="bta:281480"/>
<dbReference type="CTD" id="6389"/>
<dbReference type="eggNOG" id="KOG2403">
    <property type="taxonomic scope" value="Eukaryota"/>
</dbReference>
<dbReference type="InParanoid" id="P31039"/>
<dbReference type="OrthoDB" id="71672at2759"/>
<dbReference type="UniPathway" id="UPA00223">
    <property type="reaction ID" value="UER01006"/>
</dbReference>
<dbReference type="Proteomes" id="UP000009136">
    <property type="component" value="Unplaced"/>
</dbReference>
<dbReference type="GO" id="GO:0005743">
    <property type="term" value="C:mitochondrial inner membrane"/>
    <property type="evidence" value="ECO:0000250"/>
    <property type="project" value="UniProtKB"/>
</dbReference>
<dbReference type="GO" id="GO:0005739">
    <property type="term" value="C:mitochondrion"/>
    <property type="evidence" value="ECO:0000250"/>
    <property type="project" value="AgBase"/>
</dbReference>
<dbReference type="GO" id="GO:0045273">
    <property type="term" value="C:respiratory chain complex II (succinate dehydrogenase)"/>
    <property type="evidence" value="ECO:0000250"/>
    <property type="project" value="UniProtKB"/>
</dbReference>
<dbReference type="GO" id="GO:0009055">
    <property type="term" value="F:electron transfer activity"/>
    <property type="evidence" value="ECO:0000318"/>
    <property type="project" value="GO_Central"/>
</dbReference>
<dbReference type="GO" id="GO:0050660">
    <property type="term" value="F:flavin adenine dinucleotide binding"/>
    <property type="evidence" value="ECO:0000318"/>
    <property type="project" value="GO_Central"/>
</dbReference>
<dbReference type="GO" id="GO:0008177">
    <property type="term" value="F:succinate dehydrogenase (quinone) activity"/>
    <property type="evidence" value="ECO:0000250"/>
    <property type="project" value="UniProtKB"/>
</dbReference>
<dbReference type="GO" id="GO:0006121">
    <property type="term" value="P:mitochondrial electron transport, succinate to ubiquinone"/>
    <property type="evidence" value="ECO:0000318"/>
    <property type="project" value="GO_Central"/>
</dbReference>
<dbReference type="GO" id="GO:0006099">
    <property type="term" value="P:tricarboxylic acid cycle"/>
    <property type="evidence" value="ECO:0007669"/>
    <property type="project" value="UniProtKB-UniPathway"/>
</dbReference>
<dbReference type="FunFam" id="3.90.700.10:FF:000001">
    <property type="entry name" value="Mitochondrial succinate dehydrogenase flavoprotein subunit"/>
    <property type="match status" value="1"/>
</dbReference>
<dbReference type="FunFam" id="4.10.80.40:FF:000004">
    <property type="entry name" value="Succinate dehydrogenase [ubiquinone] flavoprotein subunit, mitochondrial"/>
    <property type="match status" value="1"/>
</dbReference>
<dbReference type="FunFam" id="3.50.50.60:FF:000482">
    <property type="entry name" value="Succinate dehydrogenase complex, subunit A, flavoprotein (Fp)"/>
    <property type="match status" value="1"/>
</dbReference>
<dbReference type="FunFam" id="3.50.50.60:FF:001062">
    <property type="entry name" value="Succinate dehydrogenase complex, subunit A, flavoprotein (Fp)"/>
    <property type="match status" value="1"/>
</dbReference>
<dbReference type="FunFam" id="1.20.58.100:FF:000001">
    <property type="entry name" value="Succinate dehydrogenase flavoprotein subunit (SdhA)"/>
    <property type="match status" value="1"/>
</dbReference>
<dbReference type="Gene3D" id="3.50.50.60">
    <property type="entry name" value="FAD/NAD(P)-binding domain"/>
    <property type="match status" value="1"/>
</dbReference>
<dbReference type="Gene3D" id="1.20.58.100">
    <property type="entry name" value="Fumarate reductase/succinate dehydrogenase flavoprotein-like, C-terminal domain"/>
    <property type="match status" value="1"/>
</dbReference>
<dbReference type="Gene3D" id="4.10.80.40">
    <property type="entry name" value="succinate dehydrogenase protein domain"/>
    <property type="match status" value="1"/>
</dbReference>
<dbReference type="Gene3D" id="3.90.700.10">
    <property type="entry name" value="Succinate dehydrogenase/fumarate reductase flavoprotein, catalytic domain"/>
    <property type="match status" value="1"/>
</dbReference>
<dbReference type="InterPro" id="IPR003953">
    <property type="entry name" value="FAD-dep_OxRdtase_2_FAD-bd"/>
</dbReference>
<dbReference type="InterPro" id="IPR036188">
    <property type="entry name" value="FAD/NAD-bd_sf"/>
</dbReference>
<dbReference type="InterPro" id="IPR003952">
    <property type="entry name" value="FRD_SDH_FAD_BS"/>
</dbReference>
<dbReference type="InterPro" id="IPR037099">
    <property type="entry name" value="Fum_R/Succ_DH_flav-like_C_sf"/>
</dbReference>
<dbReference type="InterPro" id="IPR015939">
    <property type="entry name" value="Fum_Rdtase/Succ_DH_flav-like_C"/>
</dbReference>
<dbReference type="InterPro" id="IPR030664">
    <property type="entry name" value="SdhA/FrdA/AprA"/>
</dbReference>
<dbReference type="InterPro" id="IPR027477">
    <property type="entry name" value="Succ_DH/fumarate_Rdtase_cat_sf"/>
</dbReference>
<dbReference type="InterPro" id="IPR011281">
    <property type="entry name" value="Succ_DH_flav_su_fwd"/>
</dbReference>
<dbReference type="InterPro" id="IPR014006">
    <property type="entry name" value="Succ_Dhase_FrdA_Gneg"/>
</dbReference>
<dbReference type="NCBIfam" id="TIGR01816">
    <property type="entry name" value="sdhA_forward"/>
    <property type="match status" value="1"/>
</dbReference>
<dbReference type="NCBIfam" id="TIGR01812">
    <property type="entry name" value="sdhA_frdA_Gneg"/>
    <property type="match status" value="1"/>
</dbReference>
<dbReference type="PANTHER" id="PTHR11632">
    <property type="entry name" value="SUCCINATE DEHYDROGENASE 2 FLAVOPROTEIN SUBUNIT"/>
    <property type="match status" value="1"/>
</dbReference>
<dbReference type="PANTHER" id="PTHR11632:SF51">
    <property type="entry name" value="SUCCINATE DEHYDROGENASE [UBIQUINONE] FLAVOPROTEIN SUBUNIT, MITOCHONDRIAL"/>
    <property type="match status" value="1"/>
</dbReference>
<dbReference type="Pfam" id="PF00890">
    <property type="entry name" value="FAD_binding_2"/>
    <property type="match status" value="1"/>
</dbReference>
<dbReference type="Pfam" id="PF02910">
    <property type="entry name" value="Succ_DH_flav_C"/>
    <property type="match status" value="1"/>
</dbReference>
<dbReference type="PIRSF" id="PIRSF000171">
    <property type="entry name" value="SDHA_APRA_LASPO"/>
    <property type="match status" value="1"/>
</dbReference>
<dbReference type="SUPFAM" id="SSF51905">
    <property type="entry name" value="FAD/NAD(P)-binding domain"/>
    <property type="match status" value="1"/>
</dbReference>
<dbReference type="SUPFAM" id="SSF46977">
    <property type="entry name" value="Succinate dehydrogenase/fumarate reductase flavoprotein C-terminal domain"/>
    <property type="match status" value="1"/>
</dbReference>
<dbReference type="SUPFAM" id="SSF56425">
    <property type="entry name" value="Succinate dehydrogenase/fumarate reductase flavoprotein, catalytic domain"/>
    <property type="match status" value="1"/>
</dbReference>
<dbReference type="PROSITE" id="PS00504">
    <property type="entry name" value="FRD_SDH_FAD_BINDING"/>
    <property type="match status" value="1"/>
</dbReference>
<gene>
    <name type="primary">SDHA</name>
    <name type="synonym">SDH2</name>
    <name type="synonym">SDHFP1</name>
</gene>
<accession>P31039</accession>
<accession>Q9TUY8</accession>
<keyword id="KW-0007">Acetylation</keyword>
<keyword id="KW-0903">Direct protein sequencing</keyword>
<keyword id="KW-0249">Electron transport</keyword>
<keyword id="KW-0274">FAD</keyword>
<keyword id="KW-0285">Flavoprotein</keyword>
<keyword id="KW-0472">Membrane</keyword>
<keyword id="KW-0496">Mitochondrion</keyword>
<keyword id="KW-0999">Mitochondrion inner membrane</keyword>
<keyword id="KW-0560">Oxidoreductase</keyword>
<keyword id="KW-0597">Phosphoprotein</keyword>
<keyword id="KW-1185">Reference proteome</keyword>
<keyword id="KW-0809">Transit peptide</keyword>
<keyword id="KW-0813">Transport</keyword>
<keyword id="KW-0816">Tricarboxylic acid cycle</keyword>
<keyword id="KW-0043">Tumor suppressor</keyword>